<keyword id="KW-0067">ATP-binding</keyword>
<keyword id="KW-0235">DNA replication</keyword>
<keyword id="KW-0238">DNA-binding</keyword>
<keyword id="KW-0378">Hydrolase</keyword>
<keyword id="KW-0547">Nucleotide-binding</keyword>
<keyword id="KW-0639">Primosome</keyword>
<organism>
    <name type="scientific">Buchnera aphidicola subsp. Schizaphis graminum (strain Sg)</name>
    <dbReference type="NCBI Taxonomy" id="198804"/>
    <lineage>
        <taxon>Bacteria</taxon>
        <taxon>Pseudomonadati</taxon>
        <taxon>Pseudomonadota</taxon>
        <taxon>Gammaproteobacteria</taxon>
        <taxon>Enterobacterales</taxon>
        <taxon>Erwiniaceae</taxon>
        <taxon>Buchnera</taxon>
    </lineage>
</organism>
<gene>
    <name type="primary">dnaC</name>
    <name type="ordered locus">BUsg_022</name>
</gene>
<proteinExistence type="inferred from homology"/>
<comment type="function">
    <text evidence="1">Required to load the replicative helix DnaB onto single-stranded (ss)DNA, to initiate chromosomal replication. DnaC alters the inter-domain and inter-subunit interactions of DnaB, inducing an open ring conformation that allows ssDNA to access the interior of the DnaB(6):DnaC(6) ring. Has ATPase activity only in the presence of DnaB and ssDNA. ssDNA binds to the central pore in the DnaB(6):DnaC(6) complex, making contacts with both subunits. It forms, in concert with DnaB protein and other prepriming proteins DnaT, N, N', N'' a prepriming protein complex on the specific site of the template DNA recognized by protein N' (By similarity).</text>
</comment>
<comment type="catalytic activity">
    <reaction evidence="1">
        <text>ATP + H2O = ADP + phosphate + H(+)</text>
        <dbReference type="Rhea" id="RHEA:13065"/>
        <dbReference type="ChEBI" id="CHEBI:15377"/>
        <dbReference type="ChEBI" id="CHEBI:15378"/>
        <dbReference type="ChEBI" id="CHEBI:30616"/>
        <dbReference type="ChEBI" id="CHEBI:43474"/>
        <dbReference type="ChEBI" id="CHEBI:456216"/>
    </reaction>
    <physiologicalReaction direction="left-to-right" evidence="1">
        <dbReference type="Rhea" id="RHEA:13066"/>
    </physiologicalReaction>
</comment>
<comment type="subunit">
    <text evidence="1">The helix loader is a DnaB(6):DnaC(6) complex with a crack opening large enough to allow ssDNA into the central cavity.</text>
</comment>
<comment type="similarity">
    <text evidence="2">Belongs to the DnaC family.</text>
</comment>
<accession>Q8KA79</accession>
<protein>
    <recommendedName>
        <fullName>Replicative helicase loader DnaC</fullName>
        <ecNumber evidence="1">3.6.4.-</ecNumber>
    </recommendedName>
    <alternativeName>
        <fullName>DNA replication protein DnaC</fullName>
    </alternativeName>
</protein>
<feature type="chain" id="PRO_0000079952" description="Replicative helicase loader DnaC">
    <location>
        <begin position="1"/>
        <end position="246"/>
    </location>
</feature>
<feature type="site" description="Probably involved in the interaction with the DnaB protein" evidence="1">
    <location>
        <position position="69"/>
    </location>
</feature>
<name>DNAC_BUCAP</name>
<evidence type="ECO:0000250" key="1">
    <source>
        <dbReference type="UniProtKB" id="P0AEF0"/>
    </source>
</evidence>
<evidence type="ECO:0000305" key="2"/>
<sequence>MTFYNEFFKRLQRLMPSNVKPKFESDQDLLAWNQEQGRLSSESILRENKAMKMQRVLGRSGIRELYMNCSFENYKIEHDGQRKVLKAAKRYAEEFNENIASFIFSGRPGTGKNHLASAIGNYLILHGKSILIVTVADLMSNMKGTFSGTSNITEENLLHNLSSVDLLMIDEIGMQTESRYEKVIINQIVDRRSSSKRSTGMLSNLDHRGMKNLLGERVIDRMRLGNSLWLTFEWDSYRQYVRGDEY</sequence>
<dbReference type="EC" id="3.6.4.-" evidence="1"/>
<dbReference type="EMBL" id="AE013218">
    <property type="protein sequence ID" value="AAM67594.1"/>
    <property type="molecule type" value="Genomic_DNA"/>
</dbReference>
<dbReference type="RefSeq" id="WP_011053560.1">
    <property type="nucleotide sequence ID" value="NC_004061.1"/>
</dbReference>
<dbReference type="SMR" id="Q8KA79"/>
<dbReference type="STRING" id="198804.BUsg_022"/>
<dbReference type="GeneID" id="93003485"/>
<dbReference type="KEGG" id="bas:BUsg_022"/>
<dbReference type="eggNOG" id="COG1484">
    <property type="taxonomic scope" value="Bacteria"/>
</dbReference>
<dbReference type="HOGENOM" id="CLU_062999_3_1_6"/>
<dbReference type="Proteomes" id="UP000000416">
    <property type="component" value="Chromosome"/>
</dbReference>
<dbReference type="GO" id="GO:1990077">
    <property type="term" value="C:primosome complex"/>
    <property type="evidence" value="ECO:0007669"/>
    <property type="project" value="UniProtKB-KW"/>
</dbReference>
<dbReference type="GO" id="GO:0005524">
    <property type="term" value="F:ATP binding"/>
    <property type="evidence" value="ECO:0007669"/>
    <property type="project" value="UniProtKB-KW"/>
</dbReference>
<dbReference type="GO" id="GO:0003677">
    <property type="term" value="F:DNA binding"/>
    <property type="evidence" value="ECO:0007669"/>
    <property type="project" value="UniProtKB-KW"/>
</dbReference>
<dbReference type="GO" id="GO:0016787">
    <property type="term" value="F:hydrolase activity"/>
    <property type="evidence" value="ECO:0007669"/>
    <property type="project" value="UniProtKB-KW"/>
</dbReference>
<dbReference type="GO" id="GO:0006269">
    <property type="term" value="P:DNA replication, synthesis of primer"/>
    <property type="evidence" value="ECO:0007669"/>
    <property type="project" value="UniProtKB-KW"/>
</dbReference>
<dbReference type="CDD" id="cd00009">
    <property type="entry name" value="AAA"/>
    <property type="match status" value="1"/>
</dbReference>
<dbReference type="Gene3D" id="3.40.50.300">
    <property type="entry name" value="P-loop containing nucleotide triphosphate hydrolases"/>
    <property type="match status" value="1"/>
</dbReference>
<dbReference type="InterPro" id="IPR028350">
    <property type="entry name" value="DNAC/IstB-like"/>
</dbReference>
<dbReference type="InterPro" id="IPR002611">
    <property type="entry name" value="IstB_ATP-bd"/>
</dbReference>
<dbReference type="InterPro" id="IPR027417">
    <property type="entry name" value="P-loop_NTPase"/>
</dbReference>
<dbReference type="NCBIfam" id="NF005931">
    <property type="entry name" value="PRK07952.1"/>
    <property type="match status" value="1"/>
</dbReference>
<dbReference type="PANTHER" id="PTHR30050">
    <property type="entry name" value="CHROMOSOMAL REPLICATION INITIATOR PROTEIN DNAA"/>
    <property type="match status" value="1"/>
</dbReference>
<dbReference type="PANTHER" id="PTHR30050:SF9">
    <property type="entry name" value="DNA REPLICATION PROTEIN DNAC"/>
    <property type="match status" value="1"/>
</dbReference>
<dbReference type="Pfam" id="PF01695">
    <property type="entry name" value="IstB_IS21"/>
    <property type="match status" value="1"/>
</dbReference>
<dbReference type="PIRSF" id="PIRSF003073">
    <property type="entry name" value="DNAC_TnpB_IstB"/>
    <property type="match status" value="1"/>
</dbReference>
<dbReference type="SUPFAM" id="SSF52540">
    <property type="entry name" value="P-loop containing nucleoside triphosphate hydrolases"/>
    <property type="match status" value="1"/>
</dbReference>
<reference key="1">
    <citation type="journal article" date="2002" name="Science">
        <title>50 million years of genomic stasis in endosymbiotic bacteria.</title>
        <authorList>
            <person name="Tamas I."/>
            <person name="Klasson L."/>
            <person name="Canbaeck B."/>
            <person name="Naeslund A.K."/>
            <person name="Eriksson A.-S."/>
            <person name="Wernegreen J.J."/>
            <person name="Sandstroem J.P."/>
            <person name="Moran N.A."/>
            <person name="Andersson S.G.E."/>
        </authorList>
    </citation>
    <scope>NUCLEOTIDE SEQUENCE [LARGE SCALE GENOMIC DNA]</scope>
    <source>
        <strain>Sg</strain>
    </source>
</reference>